<keyword id="KW-0002">3D-structure</keyword>
<keyword id="KW-0119">Carbohydrate metabolism</keyword>
<keyword id="KW-0325">Glycoprotein</keyword>
<keyword id="KW-0326">Glycosidase</keyword>
<keyword id="KW-0378">Hydrolase</keyword>
<keyword id="KW-0624">Polysaccharide degradation</keyword>
<keyword id="KW-0732">Signal</keyword>
<reference key="1">
    <citation type="journal article" date="1987" name="J. Bacteriol.">
        <title>Nucleotide sequence of the glucoamylase gene GLU1 in the yeast Saccharomycopsis fibuligera.</title>
        <authorList>
            <person name="Itoh T."/>
            <person name="Ohtsuki I."/>
            <person name="Yamashita I."/>
            <person name="Fukui S."/>
        </authorList>
    </citation>
    <scope>NUCLEOTIDE SEQUENCE [GENOMIC DNA]</scope>
</reference>
<reference key="2">
    <citation type="journal article" date="1998" name="Acta Crystallogr. D">
        <title>Structure of glucoamylase from Saccharomycopsis fibuligera at 1.7-A resolution.</title>
        <authorList>
            <person name="Sevcik J."/>
            <person name="Solovicova A."/>
            <person name="Hostinova E."/>
            <person name="Gasperik J."/>
            <person name="Wilson K.S."/>
            <person name="Dauter Z."/>
        </authorList>
    </citation>
    <scope>X-RAY CRYSTALLOGRAPHY (1.7 ANGSTROMS)</scope>
</reference>
<name>AMYG_SACFI</name>
<comment type="catalytic activity">
    <reaction>
        <text>Hydrolysis of terminal (1-&gt;4)-linked alpha-D-glucose residues successively from non-reducing ends of the chains with release of beta-D-glucose.</text>
        <dbReference type="EC" id="3.2.1.3"/>
    </reaction>
</comment>
<comment type="similarity">
    <text evidence="4">Belongs to the glycosyl hydrolase 15 family.</text>
</comment>
<organism>
    <name type="scientific">Saccharomycopsis fibuligera</name>
    <name type="common">Yeast</name>
    <dbReference type="NCBI Taxonomy" id="4944"/>
    <lineage>
        <taxon>Eukaryota</taxon>
        <taxon>Fungi</taxon>
        <taxon>Dikarya</taxon>
        <taxon>Ascomycota</taxon>
        <taxon>Saccharomycotina</taxon>
        <taxon>Saccharomycetes</taxon>
        <taxon>Saccharomycopsidaceae</taxon>
        <taxon>Saccharomycopsis</taxon>
    </lineage>
</organism>
<gene>
    <name type="primary">GLU1</name>
</gene>
<evidence type="ECO:0000250" key="1"/>
<evidence type="ECO:0000255" key="2"/>
<evidence type="ECO:0000255" key="3">
    <source>
        <dbReference type="PROSITE-ProRule" id="PRU10051"/>
    </source>
</evidence>
<evidence type="ECO:0000305" key="4"/>
<evidence type="ECO:0007829" key="5">
    <source>
        <dbReference type="PDB" id="1AYX"/>
    </source>
</evidence>
<evidence type="ECO:0007829" key="6">
    <source>
        <dbReference type="PDB" id="2F6D"/>
    </source>
</evidence>
<evidence type="ECO:0007829" key="7">
    <source>
        <dbReference type="PDB" id="2FBA"/>
    </source>
</evidence>
<feature type="signal peptide">
    <location>
        <begin position="1"/>
        <end position="27"/>
    </location>
</feature>
<feature type="chain" id="PRO_0000001475" description="Glucoamylase GLU1">
    <location>
        <begin position="28"/>
        <end position="519"/>
    </location>
</feature>
<feature type="active site" description="Proton acceptor" evidence="3">
    <location>
        <position position="234"/>
    </location>
</feature>
<feature type="active site" description="Proton donor" evidence="3">
    <location>
        <position position="237"/>
    </location>
</feature>
<feature type="binding site" evidence="1">
    <location>
        <position position="166"/>
    </location>
    <ligand>
        <name>substrate</name>
    </ligand>
</feature>
<feature type="glycosylation site" description="N-linked (GlcNAc...) asparagine" evidence="2">
    <location>
        <position position="115"/>
    </location>
</feature>
<feature type="glycosylation site" description="N-linked (GlcNAc...) asparagine" evidence="2">
    <location>
        <position position="127"/>
    </location>
</feature>
<feature type="glycosylation site" description="N-linked (GlcNAc...) asparagine" evidence="2">
    <location>
        <position position="205"/>
    </location>
</feature>
<feature type="helix" evidence="7">
    <location>
        <begin position="45"/>
        <end position="62"/>
    </location>
</feature>
<feature type="strand" evidence="7">
    <location>
        <begin position="69"/>
        <end position="71"/>
    </location>
</feature>
<feature type="strand" evidence="7">
    <location>
        <begin position="85"/>
        <end position="89"/>
    </location>
</feature>
<feature type="strand" evidence="7">
    <location>
        <begin position="92"/>
        <end position="94"/>
    </location>
</feature>
<feature type="helix" evidence="7">
    <location>
        <begin position="95"/>
        <end position="111"/>
    </location>
</feature>
<feature type="turn" evidence="7">
    <location>
        <begin position="112"/>
        <end position="114"/>
    </location>
</feature>
<feature type="helix" evidence="7">
    <location>
        <begin position="116"/>
        <end position="133"/>
    </location>
</feature>
<feature type="helix" evidence="7">
    <location>
        <begin position="145"/>
        <end position="151"/>
    </location>
</feature>
<feature type="helix" evidence="7">
    <location>
        <begin position="173"/>
        <end position="191"/>
    </location>
</feature>
<feature type="helix" evidence="7">
    <location>
        <begin position="209"/>
        <end position="215"/>
    </location>
</feature>
<feature type="helix" evidence="7">
    <location>
        <begin position="217"/>
        <end position="227"/>
    </location>
</feature>
<feature type="helix" evidence="7">
    <location>
        <begin position="244"/>
        <end position="263"/>
    </location>
</feature>
<feature type="helix" evidence="7">
    <location>
        <begin position="267"/>
        <end position="285"/>
    </location>
</feature>
<feature type="turn" evidence="7">
    <location>
        <begin position="287"/>
        <end position="289"/>
    </location>
</feature>
<feature type="turn" evidence="7">
    <location>
        <begin position="294"/>
        <end position="297"/>
    </location>
</feature>
<feature type="helix" evidence="7">
    <location>
        <begin position="303"/>
        <end position="307"/>
    </location>
</feature>
<feature type="helix" evidence="7">
    <location>
        <begin position="317"/>
        <end position="325"/>
    </location>
</feature>
<feature type="turn" evidence="6">
    <location>
        <begin position="328"/>
        <end position="330"/>
    </location>
</feature>
<feature type="helix" evidence="7">
    <location>
        <begin position="341"/>
        <end position="357"/>
    </location>
</feature>
<feature type="helix" evidence="7">
    <location>
        <begin position="359"/>
        <end position="361"/>
    </location>
</feature>
<feature type="strand" evidence="5">
    <location>
        <begin position="365"/>
        <end position="367"/>
    </location>
</feature>
<feature type="strand" evidence="7">
    <location>
        <begin position="380"/>
        <end position="385"/>
    </location>
</feature>
<feature type="helix" evidence="7">
    <location>
        <begin position="390"/>
        <end position="410"/>
    </location>
</feature>
<feature type="strand" evidence="7">
    <location>
        <begin position="414"/>
        <end position="417"/>
    </location>
</feature>
<feature type="helix" evidence="7">
    <location>
        <begin position="418"/>
        <end position="420"/>
    </location>
</feature>
<feature type="helix" evidence="7">
    <location>
        <begin position="421"/>
        <end position="427"/>
    </location>
</feature>
<feature type="helix" evidence="7">
    <location>
        <begin position="431"/>
        <end position="433"/>
    </location>
</feature>
<feature type="helix" evidence="7">
    <location>
        <begin position="438"/>
        <end position="440"/>
    </location>
</feature>
<feature type="strand" evidence="7">
    <location>
        <begin position="441"/>
        <end position="446"/>
    </location>
</feature>
<feature type="helix" evidence="7">
    <location>
        <begin position="451"/>
        <end position="474"/>
    </location>
</feature>
<feature type="strand" evidence="7">
    <location>
        <begin position="483"/>
        <end position="485"/>
    </location>
</feature>
<feature type="turn" evidence="7">
    <location>
        <begin position="487"/>
        <end position="489"/>
    </location>
</feature>
<feature type="strand" evidence="7">
    <location>
        <begin position="492"/>
        <end position="495"/>
    </location>
</feature>
<feature type="helix" evidence="7">
    <location>
        <begin position="499"/>
        <end position="516"/>
    </location>
</feature>
<proteinExistence type="evidence at protein level"/>
<accession>P08017</accession>
<sequence length="519" mass="57539">MKFGVLFSVFAAIVSALPLQEGPLNKRAYPSFEAYSNYKVDRTDLETFLDKQKEVSLYYLLQNIAYPEGQFNNGVPGTVIASPSTSNPDYYYQWTRDSAITFLTVLSELEDNNFNTTLAKAVEYYINTSYNLQRTSNPSGSFDDENHKGLGEPKFNTDGSAYTGAWGRPQNDGPALRAYAISRYLNDVNSLNEGKLVLTDSGDINFSSTEDIYKNIIKPDLEYVIGYWDSTGFDLWEENQGRHFFTSLVQQKALAYAVDIAKSFDDGDFANTLSSTASTLESYLSGSDGGFVNTDVNHIVENPDLLQQNSRQGLDSATYIGPLLTHDIGESSSTPFDVDNEYVLQSYYLLLEDNKDRYSVNSAYSAGAAIGRYPEDVYNGDGSSEGNPWFLATAYAAQVPYKLAYDAKSASNDITINKINYDFFNKYIVDLSTINSAYQSSDSVTIKSGSDEFNTVADNLVTFGDSFLQVILDHINDDGSLNEQLNRYTGYSTGAYSLTWSSGALLEAIRLRNKVKALA</sequence>
<protein>
    <recommendedName>
        <fullName>Glucoamylase GLU1</fullName>
        <ecNumber>3.2.1.3</ecNumber>
    </recommendedName>
    <alternativeName>
        <fullName>1,4-alpha-D-glucan glucohydrolase</fullName>
    </alternativeName>
    <alternativeName>
        <fullName>Glucan 1,4-alpha-glucosidase</fullName>
    </alternativeName>
</protein>
<dbReference type="EC" id="3.2.1.3"/>
<dbReference type="EMBL" id="L25641">
    <property type="protein sequence ID" value="AAA83997.1"/>
    <property type="molecule type" value="mRNA"/>
</dbReference>
<dbReference type="EMBL" id="M17355">
    <property type="protein sequence ID" value="AAA34649.1"/>
    <property type="molecule type" value="Genomic_DNA"/>
</dbReference>
<dbReference type="PIR" id="A54549">
    <property type="entry name" value="A54549"/>
</dbReference>
<dbReference type="PDB" id="1AYX">
    <property type="method" value="X-ray"/>
    <property type="resolution" value="1.70 A"/>
    <property type="chains" value="A=28-519"/>
</dbReference>
<dbReference type="PDB" id="2F6D">
    <property type="method" value="X-ray"/>
    <property type="resolution" value="1.60 A"/>
    <property type="chains" value="A=28-519"/>
</dbReference>
<dbReference type="PDB" id="2FBA">
    <property type="method" value="X-ray"/>
    <property type="resolution" value="1.10 A"/>
    <property type="chains" value="A=28-519"/>
</dbReference>
<dbReference type="PDBsum" id="1AYX"/>
<dbReference type="PDBsum" id="2F6D"/>
<dbReference type="PDBsum" id="2FBA"/>
<dbReference type="SMR" id="P08017"/>
<dbReference type="CAZy" id="GH15">
    <property type="family name" value="Glycoside Hydrolase Family 15"/>
</dbReference>
<dbReference type="GlyCosmos" id="P08017">
    <property type="glycosylation" value="3 sites, No reported glycans"/>
</dbReference>
<dbReference type="BRENDA" id="3.2.1.3">
    <property type="organism ID" value="2072"/>
</dbReference>
<dbReference type="EvolutionaryTrace" id="P08017"/>
<dbReference type="GO" id="GO:0000324">
    <property type="term" value="C:fungal-type vacuole"/>
    <property type="evidence" value="ECO:0007669"/>
    <property type="project" value="TreeGrafter"/>
</dbReference>
<dbReference type="GO" id="GO:0004339">
    <property type="term" value="F:glucan 1,4-alpha-glucosidase activity"/>
    <property type="evidence" value="ECO:0007669"/>
    <property type="project" value="UniProtKB-EC"/>
</dbReference>
<dbReference type="GO" id="GO:0000272">
    <property type="term" value="P:polysaccharide catabolic process"/>
    <property type="evidence" value="ECO:0007669"/>
    <property type="project" value="UniProtKB-KW"/>
</dbReference>
<dbReference type="Gene3D" id="1.50.10.10">
    <property type="match status" value="1"/>
</dbReference>
<dbReference type="InterPro" id="IPR008928">
    <property type="entry name" value="6-hairpin_glycosidase_sf"/>
</dbReference>
<dbReference type="InterPro" id="IPR012341">
    <property type="entry name" value="6hp_glycosidase-like_sf"/>
</dbReference>
<dbReference type="InterPro" id="IPR011613">
    <property type="entry name" value="GH15-like"/>
</dbReference>
<dbReference type="InterPro" id="IPR000165">
    <property type="entry name" value="Glucoamylase"/>
</dbReference>
<dbReference type="InterPro" id="IPR046966">
    <property type="entry name" value="Glucoamylase_active_site"/>
</dbReference>
<dbReference type="PANTHER" id="PTHR31616:SF9">
    <property type="entry name" value="GLUCOAMYLASE, INTRACELLULAR SPORULATION-SPECIFIC"/>
    <property type="match status" value="1"/>
</dbReference>
<dbReference type="PANTHER" id="PTHR31616">
    <property type="entry name" value="TREHALASE"/>
    <property type="match status" value="1"/>
</dbReference>
<dbReference type="Pfam" id="PF00723">
    <property type="entry name" value="Glyco_hydro_15"/>
    <property type="match status" value="1"/>
</dbReference>
<dbReference type="PRINTS" id="PR00736">
    <property type="entry name" value="GLHYDRLASE15"/>
</dbReference>
<dbReference type="SUPFAM" id="SSF48208">
    <property type="entry name" value="Six-hairpin glycosidases"/>
    <property type="match status" value="1"/>
</dbReference>
<dbReference type="PROSITE" id="PS00820">
    <property type="entry name" value="GLUCOAMYLASE"/>
    <property type="match status" value="1"/>
</dbReference>